<dbReference type="EC" id="4.6.1.17" evidence="1"/>
<dbReference type="EMBL" id="CP000753">
    <property type="protein sequence ID" value="ABS06449.1"/>
    <property type="molecule type" value="Genomic_DNA"/>
</dbReference>
<dbReference type="RefSeq" id="WP_006079755.1">
    <property type="nucleotide sequence ID" value="NC_009665.1"/>
</dbReference>
<dbReference type="SMR" id="A6WI10"/>
<dbReference type="GeneID" id="67441848"/>
<dbReference type="KEGG" id="sbm:Shew185_0278"/>
<dbReference type="HOGENOM" id="CLU_074693_1_1_6"/>
<dbReference type="UniPathway" id="UPA00344"/>
<dbReference type="GO" id="GO:0061799">
    <property type="term" value="F:cyclic pyranopterin monophosphate synthase activity"/>
    <property type="evidence" value="ECO:0007669"/>
    <property type="project" value="UniProtKB-UniRule"/>
</dbReference>
<dbReference type="GO" id="GO:0061798">
    <property type="term" value="F:GTP 3',8'-cyclase activity"/>
    <property type="evidence" value="ECO:0007669"/>
    <property type="project" value="TreeGrafter"/>
</dbReference>
<dbReference type="GO" id="GO:0006777">
    <property type="term" value="P:Mo-molybdopterin cofactor biosynthetic process"/>
    <property type="evidence" value="ECO:0007669"/>
    <property type="project" value="UniProtKB-UniRule"/>
</dbReference>
<dbReference type="CDD" id="cd01420">
    <property type="entry name" value="MoaC_PE"/>
    <property type="match status" value="1"/>
</dbReference>
<dbReference type="FunFam" id="3.30.70.640:FF:000001">
    <property type="entry name" value="Cyclic pyranopterin monophosphate synthase"/>
    <property type="match status" value="1"/>
</dbReference>
<dbReference type="Gene3D" id="3.30.70.640">
    <property type="entry name" value="Molybdopterin cofactor biosynthesis C (MoaC) domain"/>
    <property type="match status" value="1"/>
</dbReference>
<dbReference type="HAMAP" id="MF_01224_B">
    <property type="entry name" value="MoaC_B"/>
    <property type="match status" value="1"/>
</dbReference>
<dbReference type="InterPro" id="IPR023045">
    <property type="entry name" value="MoaC"/>
</dbReference>
<dbReference type="InterPro" id="IPR047594">
    <property type="entry name" value="MoaC_bact/euk"/>
</dbReference>
<dbReference type="InterPro" id="IPR036522">
    <property type="entry name" value="MoaC_sf"/>
</dbReference>
<dbReference type="InterPro" id="IPR050105">
    <property type="entry name" value="MoCo_biosynth_MoaA/MoaC"/>
</dbReference>
<dbReference type="InterPro" id="IPR002820">
    <property type="entry name" value="Mopterin_CF_biosynth-C_dom"/>
</dbReference>
<dbReference type="NCBIfam" id="TIGR00581">
    <property type="entry name" value="moaC"/>
    <property type="match status" value="1"/>
</dbReference>
<dbReference type="NCBIfam" id="NF006870">
    <property type="entry name" value="PRK09364.1"/>
    <property type="match status" value="1"/>
</dbReference>
<dbReference type="PANTHER" id="PTHR22960:SF0">
    <property type="entry name" value="MOLYBDENUM COFACTOR BIOSYNTHESIS PROTEIN 1"/>
    <property type="match status" value="1"/>
</dbReference>
<dbReference type="PANTHER" id="PTHR22960">
    <property type="entry name" value="MOLYBDOPTERIN COFACTOR SYNTHESIS PROTEIN A"/>
    <property type="match status" value="1"/>
</dbReference>
<dbReference type="Pfam" id="PF01967">
    <property type="entry name" value="MoaC"/>
    <property type="match status" value="1"/>
</dbReference>
<dbReference type="SUPFAM" id="SSF55040">
    <property type="entry name" value="Molybdenum cofactor biosynthesis protein C, MoaC"/>
    <property type="match status" value="1"/>
</dbReference>
<sequence length="158" mass="17179">MSNVFTHINADGNAHMVDVTEKAVTEREARAEAFIEMASTTLEMIMSGSHHKGDVFATARIAGIQAAKKTSDLIPLCHPLMLTKVEVDLEAQPEHNRVRITSLCKLSGKTGVEMEALTAASVAALTIYDMCKAVQKDMVISQVRLLEKRGGKSGHFKV</sequence>
<proteinExistence type="inferred from homology"/>
<feature type="chain" id="PRO_1000054135" description="Cyclic pyranopterin monophosphate synthase">
    <location>
        <begin position="1"/>
        <end position="158"/>
    </location>
</feature>
<feature type="active site" evidence="1">
    <location>
        <position position="129"/>
    </location>
</feature>
<feature type="binding site" evidence="1">
    <location>
        <begin position="76"/>
        <end position="78"/>
    </location>
    <ligand>
        <name>substrate</name>
    </ligand>
</feature>
<feature type="binding site" evidence="1">
    <location>
        <begin position="114"/>
        <end position="115"/>
    </location>
    <ligand>
        <name>substrate</name>
    </ligand>
</feature>
<protein>
    <recommendedName>
        <fullName evidence="1">Cyclic pyranopterin monophosphate synthase</fullName>
        <ecNumber evidence="1">4.6.1.17</ecNumber>
    </recommendedName>
    <alternativeName>
        <fullName evidence="1">Molybdenum cofactor biosynthesis protein C</fullName>
    </alternativeName>
</protein>
<organism>
    <name type="scientific">Shewanella baltica (strain OS185)</name>
    <dbReference type="NCBI Taxonomy" id="402882"/>
    <lineage>
        <taxon>Bacteria</taxon>
        <taxon>Pseudomonadati</taxon>
        <taxon>Pseudomonadota</taxon>
        <taxon>Gammaproteobacteria</taxon>
        <taxon>Alteromonadales</taxon>
        <taxon>Shewanellaceae</taxon>
        <taxon>Shewanella</taxon>
    </lineage>
</organism>
<evidence type="ECO:0000255" key="1">
    <source>
        <dbReference type="HAMAP-Rule" id="MF_01224"/>
    </source>
</evidence>
<gene>
    <name evidence="1" type="primary">moaC</name>
    <name type="ordered locus">Shew185_0278</name>
</gene>
<accession>A6WI10</accession>
<name>MOAC_SHEB8</name>
<comment type="function">
    <text evidence="1">Catalyzes the conversion of (8S)-3',8-cyclo-7,8-dihydroguanosine 5'-triphosphate to cyclic pyranopterin monophosphate (cPMP).</text>
</comment>
<comment type="catalytic activity">
    <reaction evidence="1">
        <text>(8S)-3',8-cyclo-7,8-dihydroguanosine 5'-triphosphate = cyclic pyranopterin phosphate + diphosphate</text>
        <dbReference type="Rhea" id="RHEA:49580"/>
        <dbReference type="ChEBI" id="CHEBI:33019"/>
        <dbReference type="ChEBI" id="CHEBI:59648"/>
        <dbReference type="ChEBI" id="CHEBI:131766"/>
        <dbReference type="EC" id="4.6.1.17"/>
    </reaction>
</comment>
<comment type="pathway">
    <text evidence="1">Cofactor biosynthesis; molybdopterin biosynthesis.</text>
</comment>
<comment type="subunit">
    <text evidence="1">Homohexamer; trimer of dimers.</text>
</comment>
<comment type="similarity">
    <text evidence="1">Belongs to the MoaC family.</text>
</comment>
<keyword id="KW-0456">Lyase</keyword>
<keyword id="KW-0501">Molybdenum cofactor biosynthesis</keyword>
<reference key="1">
    <citation type="submission" date="2007-07" db="EMBL/GenBank/DDBJ databases">
        <title>Complete sequence of chromosome of Shewanella baltica OS185.</title>
        <authorList>
            <consortium name="US DOE Joint Genome Institute"/>
            <person name="Copeland A."/>
            <person name="Lucas S."/>
            <person name="Lapidus A."/>
            <person name="Barry K."/>
            <person name="Glavina del Rio T."/>
            <person name="Dalin E."/>
            <person name="Tice H."/>
            <person name="Pitluck S."/>
            <person name="Sims D."/>
            <person name="Brettin T."/>
            <person name="Bruce D."/>
            <person name="Detter J.C."/>
            <person name="Han C."/>
            <person name="Schmutz J."/>
            <person name="Larimer F."/>
            <person name="Land M."/>
            <person name="Hauser L."/>
            <person name="Kyrpides N."/>
            <person name="Mikhailova N."/>
            <person name="Brettar I."/>
            <person name="Rodrigues J."/>
            <person name="Konstantinidis K."/>
            <person name="Tiedje J."/>
            <person name="Richardson P."/>
        </authorList>
    </citation>
    <scope>NUCLEOTIDE SEQUENCE [LARGE SCALE GENOMIC DNA]</scope>
    <source>
        <strain>OS185</strain>
    </source>
</reference>